<gene>
    <name evidence="1" type="primary">trpA</name>
    <name type="ordered locus">Z2551</name>
    <name type="ordered locus">ECs1832</name>
</gene>
<proteinExistence type="inferred from homology"/>
<accession>Q8X7B5</accession>
<feature type="chain" id="PRO_0000098779" description="Tryptophan synthase alpha chain">
    <location>
        <begin position="1"/>
        <end position="268"/>
    </location>
</feature>
<feature type="active site" description="Proton acceptor" evidence="1">
    <location>
        <position position="49"/>
    </location>
</feature>
<feature type="active site" description="Proton acceptor" evidence="1">
    <location>
        <position position="60"/>
    </location>
</feature>
<keyword id="KW-0028">Amino-acid biosynthesis</keyword>
<keyword id="KW-0057">Aromatic amino acid biosynthesis</keyword>
<keyword id="KW-0456">Lyase</keyword>
<keyword id="KW-1185">Reference proteome</keyword>
<keyword id="KW-0822">Tryptophan biosynthesis</keyword>
<comment type="function">
    <text evidence="1">The alpha subunit is responsible for the aldol cleavage of indoleglycerol phosphate to indole and glyceraldehyde 3-phosphate.</text>
</comment>
<comment type="catalytic activity">
    <reaction evidence="1">
        <text>(1S,2R)-1-C-(indol-3-yl)glycerol 3-phosphate + L-serine = D-glyceraldehyde 3-phosphate + L-tryptophan + H2O</text>
        <dbReference type="Rhea" id="RHEA:10532"/>
        <dbReference type="ChEBI" id="CHEBI:15377"/>
        <dbReference type="ChEBI" id="CHEBI:33384"/>
        <dbReference type="ChEBI" id="CHEBI:57912"/>
        <dbReference type="ChEBI" id="CHEBI:58866"/>
        <dbReference type="ChEBI" id="CHEBI:59776"/>
        <dbReference type="EC" id="4.2.1.20"/>
    </reaction>
</comment>
<comment type="pathway">
    <text evidence="1">Amino-acid biosynthesis; L-tryptophan biosynthesis; L-tryptophan from chorismate: step 5/5.</text>
</comment>
<comment type="subunit">
    <text evidence="1">Tetramer of two alpha and two beta chains.</text>
</comment>
<comment type="similarity">
    <text evidence="1">Belongs to the TrpA family.</text>
</comment>
<protein>
    <recommendedName>
        <fullName evidence="1">Tryptophan synthase alpha chain</fullName>
        <ecNumber evidence="1">4.2.1.20</ecNumber>
    </recommendedName>
</protein>
<sequence>MERYESLFAQLKERKEGAFVPFVTLGDPGIEQSLKIIDTLIEAGADTLELGIPFSDPLADGPTIQNATLRAFAAGVTPAQCFEMLALIRQKHPTIPIGLLMYANLVFNKGIDEFYAQCEKVGVDSVLVADVPVEESAPFRQAALRHNVAPIFICPPNADDDLLRQIASYGRGYTYLLSRAGVTGAENRAALPLNHLVAKLKEYNAAPPLQGFGISAPDQVKAAIDAGAAGAISGSAIVKIIEQHINEPKKMLAALKAFVQPMKAATRS</sequence>
<reference key="1">
    <citation type="journal article" date="2001" name="Nature">
        <title>Genome sequence of enterohaemorrhagic Escherichia coli O157:H7.</title>
        <authorList>
            <person name="Perna N.T."/>
            <person name="Plunkett G. III"/>
            <person name="Burland V."/>
            <person name="Mau B."/>
            <person name="Glasner J.D."/>
            <person name="Rose D.J."/>
            <person name="Mayhew G.F."/>
            <person name="Evans P.S."/>
            <person name="Gregor J."/>
            <person name="Kirkpatrick H.A."/>
            <person name="Posfai G."/>
            <person name="Hackett J."/>
            <person name="Klink S."/>
            <person name="Boutin A."/>
            <person name="Shao Y."/>
            <person name="Miller L."/>
            <person name="Grotbeck E.J."/>
            <person name="Davis N.W."/>
            <person name="Lim A."/>
            <person name="Dimalanta E.T."/>
            <person name="Potamousis K."/>
            <person name="Apodaca J."/>
            <person name="Anantharaman T.S."/>
            <person name="Lin J."/>
            <person name="Yen G."/>
            <person name="Schwartz D.C."/>
            <person name="Welch R.A."/>
            <person name="Blattner F.R."/>
        </authorList>
    </citation>
    <scope>NUCLEOTIDE SEQUENCE [LARGE SCALE GENOMIC DNA]</scope>
    <source>
        <strain>O157:H7 / EDL933 / ATCC 700927 / EHEC</strain>
    </source>
</reference>
<reference key="2">
    <citation type="journal article" date="2001" name="DNA Res.">
        <title>Complete genome sequence of enterohemorrhagic Escherichia coli O157:H7 and genomic comparison with a laboratory strain K-12.</title>
        <authorList>
            <person name="Hayashi T."/>
            <person name="Makino K."/>
            <person name="Ohnishi M."/>
            <person name="Kurokawa K."/>
            <person name="Ishii K."/>
            <person name="Yokoyama K."/>
            <person name="Han C.-G."/>
            <person name="Ohtsubo E."/>
            <person name="Nakayama K."/>
            <person name="Murata T."/>
            <person name="Tanaka M."/>
            <person name="Tobe T."/>
            <person name="Iida T."/>
            <person name="Takami H."/>
            <person name="Honda T."/>
            <person name="Sasakawa C."/>
            <person name="Ogasawara N."/>
            <person name="Yasunaga T."/>
            <person name="Kuhara S."/>
            <person name="Shiba T."/>
            <person name="Hattori M."/>
            <person name="Shinagawa H."/>
        </authorList>
    </citation>
    <scope>NUCLEOTIDE SEQUENCE [LARGE SCALE GENOMIC DNA]</scope>
    <source>
        <strain>O157:H7 / Sakai / RIMD 0509952 / EHEC</strain>
    </source>
</reference>
<dbReference type="EC" id="4.2.1.20" evidence="1"/>
<dbReference type="EMBL" id="AE005174">
    <property type="protein sequence ID" value="AAG56556.1"/>
    <property type="molecule type" value="Genomic_DNA"/>
</dbReference>
<dbReference type="EMBL" id="BA000007">
    <property type="protein sequence ID" value="BAB35255.1"/>
    <property type="molecule type" value="Genomic_DNA"/>
</dbReference>
<dbReference type="PIR" id="H85761">
    <property type="entry name" value="H85761"/>
</dbReference>
<dbReference type="PIR" id="H90857">
    <property type="entry name" value="H90857"/>
</dbReference>
<dbReference type="RefSeq" id="NP_309859.1">
    <property type="nucleotide sequence ID" value="NC_002695.1"/>
</dbReference>
<dbReference type="RefSeq" id="WP_000443092.1">
    <property type="nucleotide sequence ID" value="NZ_VOAI01000015.1"/>
</dbReference>
<dbReference type="SMR" id="Q8X7B5"/>
<dbReference type="STRING" id="155864.Z2551"/>
<dbReference type="GeneID" id="912862"/>
<dbReference type="KEGG" id="ece:Z2551"/>
<dbReference type="KEGG" id="ecs:ECs_1832"/>
<dbReference type="PATRIC" id="fig|386585.9.peg.1931"/>
<dbReference type="eggNOG" id="COG0159">
    <property type="taxonomic scope" value="Bacteria"/>
</dbReference>
<dbReference type="HOGENOM" id="CLU_016734_0_4_6"/>
<dbReference type="OMA" id="LVMTYWN"/>
<dbReference type="UniPathway" id="UPA00035">
    <property type="reaction ID" value="UER00044"/>
</dbReference>
<dbReference type="Proteomes" id="UP000000558">
    <property type="component" value="Chromosome"/>
</dbReference>
<dbReference type="Proteomes" id="UP000002519">
    <property type="component" value="Chromosome"/>
</dbReference>
<dbReference type="GO" id="GO:0005829">
    <property type="term" value="C:cytosol"/>
    <property type="evidence" value="ECO:0007669"/>
    <property type="project" value="TreeGrafter"/>
</dbReference>
<dbReference type="GO" id="GO:0004834">
    <property type="term" value="F:tryptophan synthase activity"/>
    <property type="evidence" value="ECO:0007669"/>
    <property type="project" value="UniProtKB-UniRule"/>
</dbReference>
<dbReference type="CDD" id="cd04724">
    <property type="entry name" value="Tryptophan_synthase_alpha"/>
    <property type="match status" value="1"/>
</dbReference>
<dbReference type="FunFam" id="3.20.20.70:FF:000037">
    <property type="entry name" value="Tryptophan synthase alpha chain"/>
    <property type="match status" value="1"/>
</dbReference>
<dbReference type="Gene3D" id="3.20.20.70">
    <property type="entry name" value="Aldolase class I"/>
    <property type="match status" value="1"/>
</dbReference>
<dbReference type="HAMAP" id="MF_00131">
    <property type="entry name" value="Trp_synth_alpha"/>
    <property type="match status" value="1"/>
</dbReference>
<dbReference type="InterPro" id="IPR013785">
    <property type="entry name" value="Aldolase_TIM"/>
</dbReference>
<dbReference type="InterPro" id="IPR011060">
    <property type="entry name" value="RibuloseP-bd_barrel"/>
</dbReference>
<dbReference type="InterPro" id="IPR018204">
    <property type="entry name" value="Trp_synthase_alpha_AS"/>
</dbReference>
<dbReference type="InterPro" id="IPR002028">
    <property type="entry name" value="Trp_synthase_suA"/>
</dbReference>
<dbReference type="NCBIfam" id="TIGR00262">
    <property type="entry name" value="trpA"/>
    <property type="match status" value="1"/>
</dbReference>
<dbReference type="PANTHER" id="PTHR43406:SF1">
    <property type="entry name" value="TRYPTOPHAN SYNTHASE ALPHA CHAIN, CHLOROPLASTIC"/>
    <property type="match status" value="1"/>
</dbReference>
<dbReference type="PANTHER" id="PTHR43406">
    <property type="entry name" value="TRYPTOPHAN SYNTHASE, ALPHA CHAIN"/>
    <property type="match status" value="1"/>
</dbReference>
<dbReference type="Pfam" id="PF00290">
    <property type="entry name" value="Trp_syntA"/>
    <property type="match status" value="1"/>
</dbReference>
<dbReference type="SUPFAM" id="SSF51366">
    <property type="entry name" value="Ribulose-phoshate binding barrel"/>
    <property type="match status" value="1"/>
</dbReference>
<dbReference type="PROSITE" id="PS00167">
    <property type="entry name" value="TRP_SYNTHASE_ALPHA"/>
    <property type="match status" value="1"/>
</dbReference>
<name>TRPA_ECO57</name>
<organism>
    <name type="scientific">Escherichia coli O157:H7</name>
    <dbReference type="NCBI Taxonomy" id="83334"/>
    <lineage>
        <taxon>Bacteria</taxon>
        <taxon>Pseudomonadati</taxon>
        <taxon>Pseudomonadota</taxon>
        <taxon>Gammaproteobacteria</taxon>
        <taxon>Enterobacterales</taxon>
        <taxon>Enterobacteriaceae</taxon>
        <taxon>Escherichia</taxon>
    </lineage>
</organism>
<evidence type="ECO:0000255" key="1">
    <source>
        <dbReference type="HAMAP-Rule" id="MF_00131"/>
    </source>
</evidence>